<dbReference type="EC" id="2.5.1.124" evidence="1"/>
<dbReference type="EC" id="2.5.1.125" evidence="1"/>
<dbReference type="EMBL" id="AB212624">
    <property type="protein sequence ID" value="BAE78975.1"/>
    <property type="molecule type" value="Genomic_DNA"/>
</dbReference>
<dbReference type="EMBL" id="AB187171">
    <property type="protein sequence ID" value="BAF02319.1"/>
    <property type="molecule type" value="Genomic_DNA"/>
</dbReference>
<dbReference type="SMR" id="Q2L6E3"/>
<dbReference type="KEGG" id="ag:BAF02319"/>
<dbReference type="BioCyc" id="MetaCyc:MONOMER-124371"/>
<dbReference type="GO" id="GO:0004659">
    <property type="term" value="F:prenyltransferase activity"/>
    <property type="evidence" value="ECO:0007669"/>
    <property type="project" value="UniProtKB-KW"/>
</dbReference>
<dbReference type="GO" id="GO:0016765">
    <property type="term" value="F:transferase activity, transferring alkyl or aryl (other than methyl) groups"/>
    <property type="evidence" value="ECO:0000314"/>
    <property type="project" value="UniProtKB"/>
</dbReference>
<dbReference type="GO" id="GO:0017000">
    <property type="term" value="P:antibiotic biosynthetic process"/>
    <property type="evidence" value="ECO:0000314"/>
    <property type="project" value="UniProtKB"/>
</dbReference>
<dbReference type="GO" id="GO:0008299">
    <property type="term" value="P:isoprenoid biosynthetic process"/>
    <property type="evidence" value="ECO:0007669"/>
    <property type="project" value="UniProtKB-KW"/>
</dbReference>
<dbReference type="CDD" id="cd13931">
    <property type="entry name" value="PT-CloQ_NphB"/>
    <property type="match status" value="1"/>
</dbReference>
<dbReference type="InterPro" id="IPR033964">
    <property type="entry name" value="Aro_prenylTrfase"/>
</dbReference>
<dbReference type="InterPro" id="IPR020965">
    <property type="entry name" value="Prenyltransferase_CloQ"/>
</dbReference>
<dbReference type="InterPro" id="IPR036239">
    <property type="entry name" value="PrenylTrfase-like_sf"/>
</dbReference>
<dbReference type="Pfam" id="PF11468">
    <property type="entry name" value="PTase_Orf2"/>
    <property type="match status" value="1"/>
</dbReference>
<dbReference type="SFLD" id="SFLDS00036">
    <property type="entry name" value="Aromatic_Prenyltransferase"/>
    <property type="match status" value="1"/>
</dbReference>
<dbReference type="SFLD" id="SFLDG01163">
    <property type="entry name" value="II"/>
    <property type="match status" value="1"/>
</dbReference>
<dbReference type="SUPFAM" id="SSF143492">
    <property type="entry name" value="Prenyltransferase-like"/>
    <property type="match status" value="1"/>
</dbReference>
<protein>
    <recommendedName>
        <fullName evidence="3">Furaquinocin biosynthesis prenyltransferase</fullName>
        <ecNumber evidence="1">2.5.1.124</ecNumber>
        <ecNumber evidence="1">2.5.1.125</ecNumber>
    </recommendedName>
    <alternativeName>
        <fullName evidence="3">6-linalyl-2-O,3-dimethylflaviolin synthase</fullName>
    </alternativeName>
    <alternativeName>
        <fullName evidence="3">7-geranyloxy-5-hydroxy-2-methoxy-3-methylnaphthalene-1,4-dione synthase</fullName>
    </alternativeName>
</protein>
<feature type="chain" id="PRO_0000431583" description="Furaquinocin biosynthesis prenyltransferase">
    <location>
        <begin position="1"/>
        <end position="307"/>
    </location>
</feature>
<sequence>MPGTDDVAVDVASVYSAIEKSAGLLDVTAAREVVWPVLTAFEDVLEQAVIAFRVATNARHEGDFDVRFTVPEEVDPYAVALSRSLIAKTDHPVGSLLSDIQQLCSVDTYGVDLGVKSGFKKVWVYFPAGEHETLARLTGLTSMPGSLAGNVDFFTRYGLADKVDVIGIDYRSRTMNVYFAAPSECFERETVLAMHRDIGLPSPSEQMFKFCENSFGLYTTLNWDTMEIERISYGVKTENPMTFFARLGTKVEHFVKNVPYGVDTQKMVYAAVTSSGEEYYKLQSYYRWRSVSRLNAAYIAARDKEST</sequence>
<name>FUR7_STREO</name>
<proteinExistence type="evidence at protein level"/>
<keyword id="KW-0414">Isoprene biosynthesis</keyword>
<keyword id="KW-0637">Prenyltransferase</keyword>
<keyword id="KW-0808">Transferase</keyword>
<comment type="function">
    <text evidence="1">Involved in the biosynthesis of furaquinocin. Catalyzes the transfer of a geranyl group to 2-methoxy-3-methyl-flaviolin to yield 6-prenyl-2-methoxy-3-methyl-flaviolin and 7-O-geranyl-2-methoxy-3-methyl-flaviolin in a 10:1 ratio. Can also use other substrates such as flaviolin or 1,3-dihydroxy naphthalene, and can also use DMAPP as prenyl donor.</text>
</comment>
<comment type="catalytic activity">
    <reaction evidence="1">
        <text>2-O,3-dimethylflaviolin + (2E)-geranyl diphosphate = 6-linalyl-2-O,3-dimethylflaviolin + diphosphate</text>
        <dbReference type="Rhea" id="RHEA:41007"/>
        <dbReference type="ChEBI" id="CHEBI:33019"/>
        <dbReference type="ChEBI" id="CHEBI:58057"/>
        <dbReference type="ChEBI" id="CHEBI:78588"/>
        <dbReference type="ChEBI" id="CHEBI:78589"/>
        <dbReference type="EC" id="2.5.1.124"/>
    </reaction>
</comment>
<comment type="catalytic activity">
    <reaction evidence="1">
        <text>2-O,3-dimethylflaviolin + (2E)-geranyl diphosphate + H(+) = 7-O-geranyl-2-O,3-dimethylflaviolin + diphosphate</text>
        <dbReference type="Rhea" id="RHEA:33839"/>
        <dbReference type="ChEBI" id="CHEBI:15378"/>
        <dbReference type="ChEBI" id="CHEBI:33019"/>
        <dbReference type="ChEBI" id="CHEBI:58057"/>
        <dbReference type="ChEBI" id="CHEBI:78589"/>
        <dbReference type="ChEBI" id="CHEBI:78590"/>
        <dbReference type="EC" id="2.5.1.125"/>
    </reaction>
</comment>
<comment type="activity regulation">
    <text evidence="1">Does not require any metal cations for activity.</text>
</comment>
<comment type="biophysicochemical properties">
    <kinetics>
        <KM evidence="1">0.054 mM for 6-prenyl-2-methoxy-3-methyl-flaviolin</KM>
        <KM evidence="1">0.098 mM for geranyl diphosphate</KM>
        <Vmax evidence="1">1.1 nmol/min/mg enzyme</Vmax>
    </kinetics>
</comment>
<comment type="subunit">
    <text evidence="1">Monomer.</text>
</comment>
<comment type="similarity">
    <text evidence="3">Belongs to the aromatic prenyltransferase family.</text>
</comment>
<evidence type="ECO:0000269" key="1">
    <source>
    </source>
</evidence>
<evidence type="ECO:0000303" key="2">
    <source>
    </source>
</evidence>
<evidence type="ECO:0000305" key="3"/>
<organism>
    <name type="scientific">Streptomyces sp. (strain KO-3988)</name>
    <dbReference type="NCBI Taxonomy" id="285219"/>
    <lineage>
        <taxon>Bacteria</taxon>
        <taxon>Bacillati</taxon>
        <taxon>Actinomycetota</taxon>
        <taxon>Actinomycetes</taxon>
        <taxon>Kitasatosporales</taxon>
        <taxon>Streptomycetaceae</taxon>
        <taxon>Streptomyces</taxon>
    </lineage>
</organism>
<accession>Q2L6E3</accession>
<reference key="1">
    <citation type="journal article" date="2006" name="J. Bacteriol.">
        <title>Biosynthesis of a natural polyketide-isoprenoid hybrid compound, furaquinocin A: identification and heterologous expression of the gene cluster.</title>
        <authorList>
            <person name="Kawasaki T."/>
            <person name="Hayashi Y."/>
            <person name="Kuzuyama T."/>
            <person name="Furihata K."/>
            <person name="Itoh N."/>
            <person name="Seto H."/>
            <person name="Dairi T."/>
        </authorList>
    </citation>
    <scope>NUCLEOTIDE SEQUENCE [GENOMIC DNA]</scope>
    <source>
        <strain>KO-3988</strain>
    </source>
</reference>
<reference key="2">
    <citation type="journal article" date="2010" name="J. Biol. Chem.">
        <title>Functional characterization of the promiscuous prenyltransferase responsible for furaquinocin biosynthesis: identification of a physiological polyketide substrate and its prenylated reaction products.</title>
        <authorList>
            <person name="Kumano T."/>
            <person name="Tomita T."/>
            <person name="Nishiyama M."/>
            <person name="Kuzuyama T."/>
        </authorList>
    </citation>
    <scope>FUNCTION</scope>
    <scope>CATALYTIC ACTIVITY</scope>
    <scope>ACTIVITY REGULATION</scope>
    <scope>BIOPHYSICOCHEMICAL PROPERTIES</scope>
    <scope>SUBUNIT</scope>
    <source>
        <strain>KO-3988</strain>
    </source>
</reference>
<gene>
    <name evidence="2" type="primary">fur7</name>
</gene>